<comment type="function">
    <text evidence="1">One of the essential components for the initiation of protein synthesis. Stabilizes the binding of IF-2 and IF-3 on the 30S subunit to which N-formylmethionyl-tRNA(fMet) subsequently binds. Helps modulate mRNA selection, yielding the 30S pre-initiation complex (PIC). Upon addition of the 50S ribosomal subunit IF-1, IF-2 and IF-3 are released leaving the mature 70S translation initiation complex.</text>
</comment>
<comment type="subunit">
    <text evidence="1">Component of the 30S ribosomal translation pre-initiation complex which assembles on the 30S ribosome in the order IF-2 and IF-3, IF-1 and N-formylmethionyl-tRNA(fMet); mRNA recruitment can occur at any time during PIC assembly.</text>
</comment>
<comment type="subcellular location">
    <subcellularLocation>
        <location evidence="1">Cytoplasm</location>
    </subcellularLocation>
</comment>
<comment type="similarity">
    <text evidence="1">Belongs to the IF-1 family.</text>
</comment>
<dbReference type="EMBL" id="BA000030">
    <property type="protein sequence ID" value="BAC72661.1"/>
    <property type="molecule type" value="Genomic_DNA"/>
</dbReference>
<dbReference type="SMR" id="P60516"/>
<dbReference type="KEGG" id="sma:SAVERM_4949"/>
<dbReference type="eggNOG" id="COG0361">
    <property type="taxonomic scope" value="Bacteria"/>
</dbReference>
<dbReference type="HOGENOM" id="CLU_151267_1_0_11"/>
<dbReference type="OrthoDB" id="9803250at2"/>
<dbReference type="Proteomes" id="UP000000428">
    <property type="component" value="Chromosome"/>
</dbReference>
<dbReference type="GO" id="GO:0005829">
    <property type="term" value="C:cytosol"/>
    <property type="evidence" value="ECO:0007669"/>
    <property type="project" value="TreeGrafter"/>
</dbReference>
<dbReference type="GO" id="GO:0043022">
    <property type="term" value="F:ribosome binding"/>
    <property type="evidence" value="ECO:0007669"/>
    <property type="project" value="UniProtKB-UniRule"/>
</dbReference>
<dbReference type="GO" id="GO:0019843">
    <property type="term" value="F:rRNA binding"/>
    <property type="evidence" value="ECO:0007669"/>
    <property type="project" value="UniProtKB-UniRule"/>
</dbReference>
<dbReference type="GO" id="GO:0003743">
    <property type="term" value="F:translation initiation factor activity"/>
    <property type="evidence" value="ECO:0007669"/>
    <property type="project" value="UniProtKB-UniRule"/>
</dbReference>
<dbReference type="CDD" id="cd04451">
    <property type="entry name" value="S1_IF1"/>
    <property type="match status" value="1"/>
</dbReference>
<dbReference type="FunFam" id="2.40.50.140:FF:000002">
    <property type="entry name" value="Translation initiation factor IF-1"/>
    <property type="match status" value="1"/>
</dbReference>
<dbReference type="Gene3D" id="2.40.50.140">
    <property type="entry name" value="Nucleic acid-binding proteins"/>
    <property type="match status" value="1"/>
</dbReference>
<dbReference type="HAMAP" id="MF_00075">
    <property type="entry name" value="IF_1"/>
    <property type="match status" value="1"/>
</dbReference>
<dbReference type="InterPro" id="IPR012340">
    <property type="entry name" value="NA-bd_OB-fold"/>
</dbReference>
<dbReference type="InterPro" id="IPR006196">
    <property type="entry name" value="RNA-binding_domain_S1_IF1"/>
</dbReference>
<dbReference type="InterPro" id="IPR003029">
    <property type="entry name" value="S1_domain"/>
</dbReference>
<dbReference type="InterPro" id="IPR004368">
    <property type="entry name" value="TIF_IF1"/>
</dbReference>
<dbReference type="NCBIfam" id="TIGR00008">
    <property type="entry name" value="infA"/>
    <property type="match status" value="1"/>
</dbReference>
<dbReference type="PANTHER" id="PTHR33370">
    <property type="entry name" value="TRANSLATION INITIATION FACTOR IF-1, CHLOROPLASTIC"/>
    <property type="match status" value="1"/>
</dbReference>
<dbReference type="PANTHER" id="PTHR33370:SF1">
    <property type="entry name" value="TRANSLATION INITIATION FACTOR IF-1, CHLOROPLASTIC"/>
    <property type="match status" value="1"/>
</dbReference>
<dbReference type="Pfam" id="PF01176">
    <property type="entry name" value="eIF-1a"/>
    <property type="match status" value="1"/>
</dbReference>
<dbReference type="SMART" id="SM00316">
    <property type="entry name" value="S1"/>
    <property type="match status" value="1"/>
</dbReference>
<dbReference type="SUPFAM" id="SSF50249">
    <property type="entry name" value="Nucleic acid-binding proteins"/>
    <property type="match status" value="1"/>
</dbReference>
<dbReference type="PROSITE" id="PS50832">
    <property type="entry name" value="S1_IF1_TYPE"/>
    <property type="match status" value="1"/>
</dbReference>
<sequence>MAKKQGAIEIEGTVVESLPNAMFKVELQNGHQVLAHISGKMRMHYIRILPDDRVVVELSPYDLTRGRIVYRYK</sequence>
<proteinExistence type="inferred from homology"/>
<evidence type="ECO:0000255" key="1">
    <source>
        <dbReference type="HAMAP-Rule" id="MF_00075"/>
    </source>
</evidence>
<reference key="1">
    <citation type="journal article" date="2001" name="Proc. Natl. Acad. Sci. U.S.A.">
        <title>Genome sequence of an industrial microorganism Streptomyces avermitilis: deducing the ability of producing secondary metabolites.</title>
        <authorList>
            <person name="Omura S."/>
            <person name="Ikeda H."/>
            <person name="Ishikawa J."/>
            <person name="Hanamoto A."/>
            <person name="Takahashi C."/>
            <person name="Shinose M."/>
            <person name="Takahashi Y."/>
            <person name="Horikawa H."/>
            <person name="Nakazawa H."/>
            <person name="Osonoe T."/>
            <person name="Kikuchi H."/>
            <person name="Shiba T."/>
            <person name="Sakaki Y."/>
            <person name="Hattori M."/>
        </authorList>
    </citation>
    <scope>NUCLEOTIDE SEQUENCE [LARGE SCALE GENOMIC DNA]</scope>
    <source>
        <strain>ATCC 31267 / DSM 46492 / JCM 5070 / NBRC 14893 / NCIMB 12804 / NRRL 8165 / MA-4680</strain>
    </source>
</reference>
<reference key="2">
    <citation type="journal article" date="2003" name="Nat. Biotechnol.">
        <title>Complete genome sequence and comparative analysis of the industrial microorganism Streptomyces avermitilis.</title>
        <authorList>
            <person name="Ikeda H."/>
            <person name="Ishikawa J."/>
            <person name="Hanamoto A."/>
            <person name="Shinose M."/>
            <person name="Kikuchi H."/>
            <person name="Shiba T."/>
            <person name="Sakaki Y."/>
            <person name="Hattori M."/>
            <person name="Omura S."/>
        </authorList>
    </citation>
    <scope>NUCLEOTIDE SEQUENCE [LARGE SCALE GENOMIC DNA]</scope>
    <source>
        <strain>ATCC 31267 / DSM 46492 / JCM 5070 / NBRC 14893 / NCIMB 12804 / NRRL 8165 / MA-4680</strain>
    </source>
</reference>
<protein>
    <recommendedName>
        <fullName evidence="1">Translation initiation factor IF-1 1</fullName>
    </recommendedName>
</protein>
<accession>P60516</accession>
<accession>O54209</accession>
<name>IF11_STRAW</name>
<feature type="chain" id="PRO_0000095875" description="Translation initiation factor IF-1 1">
    <location>
        <begin position="1"/>
        <end position="73"/>
    </location>
</feature>
<feature type="domain" description="S1-like" evidence="1">
    <location>
        <begin position="1"/>
        <end position="73"/>
    </location>
</feature>
<keyword id="KW-0963">Cytoplasm</keyword>
<keyword id="KW-0396">Initiation factor</keyword>
<keyword id="KW-0648">Protein biosynthesis</keyword>
<keyword id="KW-1185">Reference proteome</keyword>
<keyword id="KW-0694">RNA-binding</keyword>
<keyword id="KW-0699">rRNA-binding</keyword>
<gene>
    <name evidence="1" type="primary">infA1</name>
    <name type="ordered locus">SAV_4949</name>
</gene>
<organism>
    <name type="scientific">Streptomyces avermitilis (strain ATCC 31267 / DSM 46492 / JCM 5070 / NBRC 14893 / NCIMB 12804 / NRRL 8165 / MA-4680)</name>
    <dbReference type="NCBI Taxonomy" id="227882"/>
    <lineage>
        <taxon>Bacteria</taxon>
        <taxon>Bacillati</taxon>
        <taxon>Actinomycetota</taxon>
        <taxon>Actinomycetes</taxon>
        <taxon>Kitasatosporales</taxon>
        <taxon>Streptomycetaceae</taxon>
        <taxon>Streptomyces</taxon>
    </lineage>
</organism>